<accession>P60832</accession>
<reference key="1">
    <citation type="journal article" date="2004" name="J. Bacteriol.">
        <title>Complete genome sequence of the genetically tractable hydrogenotrophic methanogen Methanococcus maripaludis.</title>
        <authorList>
            <person name="Hendrickson E.L."/>
            <person name="Kaul R."/>
            <person name="Zhou Y."/>
            <person name="Bovee D."/>
            <person name="Chapman P."/>
            <person name="Chung J."/>
            <person name="Conway de Macario E."/>
            <person name="Dodsworth J.A."/>
            <person name="Gillett W."/>
            <person name="Graham D.E."/>
            <person name="Hackett M."/>
            <person name="Haydock A.K."/>
            <person name="Kang A."/>
            <person name="Land M.L."/>
            <person name="Levy R."/>
            <person name="Lie T.J."/>
            <person name="Major T.A."/>
            <person name="Moore B.C."/>
            <person name="Porat I."/>
            <person name="Palmeiri A."/>
            <person name="Rouse G."/>
            <person name="Saenphimmachak C."/>
            <person name="Soell D."/>
            <person name="Van Dien S."/>
            <person name="Wang T."/>
            <person name="Whitman W.B."/>
            <person name="Xia Q."/>
            <person name="Zhang Y."/>
            <person name="Larimer F.W."/>
            <person name="Olson M.V."/>
            <person name="Leigh J.A."/>
        </authorList>
    </citation>
    <scope>NUCLEOTIDE SEQUENCE [LARGE SCALE GENOMIC DNA]</scope>
    <source>
        <strain>DSM 14266 / JCM 13030 / NBRC 101832 / S2 / LL</strain>
    </source>
</reference>
<reference key="2">
    <citation type="journal article" date="2010" name="Proc. Natl. Acad. Sci. U.S.A.">
        <title>Ribosomal protein L7Ae is a subunit of archaeal RNase P.</title>
        <authorList>
            <person name="Cho I.M."/>
            <person name="Lai L.B."/>
            <person name="Susanti D."/>
            <person name="Mukhopadhyay B."/>
            <person name="Gopalan V."/>
        </authorList>
    </citation>
    <scope>FUNCTION</scope>
    <scope>BIOPHYSICOCHEMICAL PROPERTIES</scope>
    <scope>SUBUNIT</scope>
    <scope>SUBCELLULAR LOCATION</scope>
    <source>
        <strain>DSM 14266 / JCM 13030 / NBRC 101832 / S2 / LL</strain>
    </source>
</reference>
<organism>
    <name type="scientific">Methanococcus maripaludis (strain DSM 14266 / JCM 13030 / NBRC 101832 / S2 / LL)</name>
    <dbReference type="NCBI Taxonomy" id="267377"/>
    <lineage>
        <taxon>Archaea</taxon>
        <taxon>Methanobacteriati</taxon>
        <taxon>Methanobacteriota</taxon>
        <taxon>Methanomada group</taxon>
        <taxon>Methanococci</taxon>
        <taxon>Methanococcales</taxon>
        <taxon>Methanococcaceae</taxon>
        <taxon>Methanococcus</taxon>
    </lineage>
</organism>
<proteinExistence type="evidence at protein level"/>
<protein>
    <recommendedName>
        <fullName evidence="1">Ribonuclease P protein component 1</fullName>
        <shortName evidence="1">RNase P component 1</shortName>
        <ecNumber evidence="1">3.1.26.5</ecNumber>
    </recommendedName>
    <alternativeName>
        <fullName evidence="1">Rpp29</fullName>
    </alternativeName>
</protein>
<gene>
    <name evidence="1" type="primary">rnp1</name>
    <name type="ordered locus">MMP1407</name>
</gene>
<comment type="function">
    <text evidence="1 2">Part of ribonuclease P, a protein complex that generates mature tRNA molecules by cleaving their 5'-ends.</text>
</comment>
<comment type="catalytic activity">
    <reaction evidence="1">
        <text>Endonucleolytic cleavage of RNA, removing 5'-extranucleotides from tRNA precursor.</text>
        <dbReference type="EC" id="3.1.26.5"/>
    </reaction>
</comment>
<comment type="biophysicochemical properties">
    <kinetics>
        <KM evidence="2">2.6 uM for pre-tRNA-Tyr in the absence of L7Ae</KM>
        <KM evidence="2">0.044 uM for pre-tRNA-Tyr in the presence of L7Ae</KM>
        <text>kcat 10 min(-1) in absence of L7Ae, 63 min(-1) in presence of L7Ae. Kinetic parameters determined at 37 degrees Celsius.</text>
    </kinetics>
    <temperatureDependence>
        <text evidence="2">Optimum temperature is 36-38 degrees Celsius in the absence of L7Ae, 48-50 degrees Celsius in presence of L7Ae.</text>
    </temperatureDependence>
</comment>
<comment type="subunit">
    <text evidence="2">Consists of a catalytic RNA component and at least 5 protein subunits.</text>
</comment>
<comment type="subcellular location">
    <subcellularLocation>
        <location evidence="1 2">Cytoplasm</location>
    </subcellularLocation>
</comment>
<comment type="similarity">
    <text evidence="1">Belongs to the eukaryotic/archaeal RNase P protein component 1 family.</text>
</comment>
<evidence type="ECO:0000255" key="1">
    <source>
        <dbReference type="HAMAP-Rule" id="MF_00754"/>
    </source>
</evidence>
<evidence type="ECO:0000269" key="2">
    <source>
    </source>
</evidence>
<name>RNP1_METMP</name>
<keyword id="KW-0963">Cytoplasm</keyword>
<keyword id="KW-0255">Endonuclease</keyword>
<keyword id="KW-0378">Hydrolase</keyword>
<keyword id="KW-0540">Nuclease</keyword>
<keyword id="KW-1185">Reference proteome</keyword>
<keyword id="KW-0819">tRNA processing</keyword>
<feature type="chain" id="PRO_0000128432" description="Ribonuclease P protein component 1">
    <location>
        <begin position="1"/>
        <end position="96"/>
    </location>
</feature>
<sequence length="96" mass="11069">MSQNILRHELIGLNLEVVKSTDSGLISTKGRVINETRNTLVLEKENGKEITLVKEISTFRIQFESENVVKIDIDGRLLVGRPEDRLKRKIKQLYSY</sequence>
<dbReference type="EC" id="3.1.26.5" evidence="1"/>
<dbReference type="EMBL" id="BX950229">
    <property type="protein sequence ID" value="CAF30963.1"/>
    <property type="molecule type" value="Genomic_DNA"/>
</dbReference>
<dbReference type="SMR" id="P60832"/>
<dbReference type="STRING" id="267377.MMP1407"/>
<dbReference type="EnsemblBacteria" id="CAF30963">
    <property type="protein sequence ID" value="CAF30963"/>
    <property type="gene ID" value="MMP1407"/>
</dbReference>
<dbReference type="KEGG" id="mmp:MMP1407"/>
<dbReference type="PATRIC" id="fig|267377.15.peg.1443"/>
<dbReference type="eggNOG" id="arCOG00784">
    <property type="taxonomic scope" value="Archaea"/>
</dbReference>
<dbReference type="HOGENOM" id="CLU_107020_2_1_2"/>
<dbReference type="BRENDA" id="3.1.26.5">
    <property type="organism ID" value="3262"/>
</dbReference>
<dbReference type="Proteomes" id="UP000000590">
    <property type="component" value="Chromosome"/>
</dbReference>
<dbReference type="GO" id="GO:0005737">
    <property type="term" value="C:cytoplasm"/>
    <property type="evidence" value="ECO:0000314"/>
    <property type="project" value="UniProtKB"/>
</dbReference>
<dbReference type="GO" id="GO:0030677">
    <property type="term" value="C:ribonuclease P complex"/>
    <property type="evidence" value="ECO:0000314"/>
    <property type="project" value="UniProtKB"/>
</dbReference>
<dbReference type="GO" id="GO:0004526">
    <property type="term" value="F:ribonuclease P activity"/>
    <property type="evidence" value="ECO:0000314"/>
    <property type="project" value="UniProtKB"/>
</dbReference>
<dbReference type="GO" id="GO:0003723">
    <property type="term" value="F:RNA binding"/>
    <property type="evidence" value="ECO:0007669"/>
    <property type="project" value="InterPro"/>
</dbReference>
<dbReference type="GO" id="GO:0001682">
    <property type="term" value="P:tRNA 5'-leader removal"/>
    <property type="evidence" value="ECO:0000314"/>
    <property type="project" value="UniProtKB"/>
</dbReference>
<dbReference type="Gene3D" id="2.30.30.210">
    <property type="entry name" value="Ribonuclease P/MRP, subunit p29"/>
    <property type="match status" value="1"/>
</dbReference>
<dbReference type="HAMAP" id="MF_00754">
    <property type="entry name" value="RNase_P_1"/>
    <property type="match status" value="1"/>
</dbReference>
<dbReference type="InterPro" id="IPR036980">
    <property type="entry name" value="RNase_P/MRP_Rpp29_sf"/>
</dbReference>
<dbReference type="InterPro" id="IPR023538">
    <property type="entry name" value="RNP1"/>
</dbReference>
<dbReference type="InterPro" id="IPR023534">
    <property type="entry name" value="Rof/RNase_P-like"/>
</dbReference>
<dbReference type="InterPro" id="IPR002730">
    <property type="entry name" value="Rpp29/RNP1"/>
</dbReference>
<dbReference type="NCBIfam" id="NF046110">
    <property type="entry name" value="RNaseP1Mthb"/>
    <property type="match status" value="1"/>
</dbReference>
<dbReference type="Pfam" id="PF01868">
    <property type="entry name" value="RNase_P-MRP_p29"/>
    <property type="match status" value="1"/>
</dbReference>
<dbReference type="SMART" id="SM00538">
    <property type="entry name" value="POP4"/>
    <property type="match status" value="1"/>
</dbReference>
<dbReference type="SUPFAM" id="SSF101744">
    <property type="entry name" value="Rof/RNase P subunit-like"/>
    <property type="match status" value="1"/>
</dbReference>